<reference key="1">
    <citation type="submission" date="2008-04" db="EMBL/GenBank/DDBJ databases">
        <title>Complete sequence of chromosome of Natranaerobius thermophilus JW/NM-WN-LF.</title>
        <authorList>
            <consortium name="US DOE Joint Genome Institute"/>
            <person name="Copeland A."/>
            <person name="Lucas S."/>
            <person name="Lapidus A."/>
            <person name="Glavina del Rio T."/>
            <person name="Dalin E."/>
            <person name="Tice H."/>
            <person name="Bruce D."/>
            <person name="Goodwin L."/>
            <person name="Pitluck S."/>
            <person name="Chertkov O."/>
            <person name="Brettin T."/>
            <person name="Detter J.C."/>
            <person name="Han C."/>
            <person name="Kuske C.R."/>
            <person name="Schmutz J."/>
            <person name="Larimer F."/>
            <person name="Land M."/>
            <person name="Hauser L."/>
            <person name="Kyrpides N."/>
            <person name="Lykidis A."/>
            <person name="Mesbah N.M."/>
            <person name="Wiegel J."/>
        </authorList>
    </citation>
    <scope>NUCLEOTIDE SEQUENCE [LARGE SCALE GENOMIC DNA]</scope>
    <source>
        <strain>ATCC BAA-1301 / DSM 18059 / JW/NM-WN-LF</strain>
    </source>
</reference>
<feature type="chain" id="PRO_1000120873" description="NAD kinase">
    <location>
        <begin position="1"/>
        <end position="286"/>
    </location>
</feature>
<feature type="active site" description="Proton acceptor" evidence="1">
    <location>
        <position position="68"/>
    </location>
</feature>
<feature type="binding site" evidence="1">
    <location>
        <begin position="68"/>
        <end position="69"/>
    </location>
    <ligand>
        <name>NAD(+)</name>
        <dbReference type="ChEBI" id="CHEBI:57540"/>
    </ligand>
</feature>
<feature type="binding site" evidence="1">
    <location>
        <position position="73"/>
    </location>
    <ligand>
        <name>NAD(+)</name>
        <dbReference type="ChEBI" id="CHEBI:57540"/>
    </ligand>
</feature>
<feature type="binding site" evidence="1">
    <location>
        <begin position="142"/>
        <end position="143"/>
    </location>
    <ligand>
        <name>NAD(+)</name>
        <dbReference type="ChEBI" id="CHEBI:57540"/>
    </ligand>
</feature>
<feature type="binding site" evidence="1">
    <location>
        <position position="153"/>
    </location>
    <ligand>
        <name>NAD(+)</name>
        <dbReference type="ChEBI" id="CHEBI:57540"/>
    </ligand>
</feature>
<feature type="binding site" evidence="1">
    <location>
        <position position="172"/>
    </location>
    <ligand>
        <name>NAD(+)</name>
        <dbReference type="ChEBI" id="CHEBI:57540"/>
    </ligand>
</feature>
<feature type="binding site" evidence="1">
    <location>
        <begin position="183"/>
        <end position="188"/>
    </location>
    <ligand>
        <name>NAD(+)</name>
        <dbReference type="ChEBI" id="CHEBI:57540"/>
    </ligand>
</feature>
<feature type="binding site" evidence="1">
    <location>
        <position position="242"/>
    </location>
    <ligand>
        <name>NAD(+)</name>
        <dbReference type="ChEBI" id="CHEBI:57540"/>
    </ligand>
</feature>
<evidence type="ECO:0000255" key="1">
    <source>
        <dbReference type="HAMAP-Rule" id="MF_00361"/>
    </source>
</evidence>
<keyword id="KW-0067">ATP-binding</keyword>
<keyword id="KW-0963">Cytoplasm</keyword>
<keyword id="KW-0418">Kinase</keyword>
<keyword id="KW-0520">NAD</keyword>
<keyword id="KW-0521">NADP</keyword>
<keyword id="KW-0547">Nucleotide-binding</keyword>
<keyword id="KW-1185">Reference proteome</keyword>
<keyword id="KW-0808">Transferase</keyword>
<sequence>MRSVGLIPNIQKDQVAEITSRMYKILSEHDIDVYLTHEGADLIGTESAGVSSDVMGEVAEMIIILGGDGTILKAAREYAPYDIPLLGINLGKMGFLAEIEANEVMAYLESLLTGNYTIEERMMLDATVLRDRKEITTFSALNDVIIAKGPFSRIIEVETKVGGNYLETYPGDGLIVTSPTGSTGYSFSAGGPIISSNLEVMMITPICPHLMHNRSVIISSDEVVTAKMKTNYAVVVLTVDGQQGFTLQDGDEIKVKKSNYKTKLVKLRRRSFYQLLNEKLTGGQEV</sequence>
<name>NADK_NATTJ</name>
<protein>
    <recommendedName>
        <fullName evidence="1">NAD kinase</fullName>
        <ecNumber evidence="1">2.7.1.23</ecNumber>
    </recommendedName>
    <alternativeName>
        <fullName evidence="1">ATP-dependent NAD kinase</fullName>
    </alternativeName>
</protein>
<accession>B2A524</accession>
<organism>
    <name type="scientific">Natranaerobius thermophilus (strain ATCC BAA-1301 / DSM 18059 / JW/NM-WN-LF)</name>
    <dbReference type="NCBI Taxonomy" id="457570"/>
    <lineage>
        <taxon>Bacteria</taxon>
        <taxon>Bacillati</taxon>
        <taxon>Bacillota</taxon>
        <taxon>Clostridia</taxon>
        <taxon>Natranaerobiales</taxon>
        <taxon>Natranaerobiaceae</taxon>
        <taxon>Natranaerobius</taxon>
    </lineage>
</organism>
<dbReference type="EC" id="2.7.1.23" evidence="1"/>
<dbReference type="EMBL" id="CP001034">
    <property type="protein sequence ID" value="ACB85266.1"/>
    <property type="molecule type" value="Genomic_DNA"/>
</dbReference>
<dbReference type="RefSeq" id="WP_012448134.1">
    <property type="nucleotide sequence ID" value="NC_010718.1"/>
</dbReference>
<dbReference type="SMR" id="B2A524"/>
<dbReference type="FunCoup" id="B2A524">
    <property type="interactions" value="416"/>
</dbReference>
<dbReference type="STRING" id="457570.Nther_1692"/>
<dbReference type="KEGG" id="nth:Nther_1692"/>
<dbReference type="eggNOG" id="COG0061">
    <property type="taxonomic scope" value="Bacteria"/>
</dbReference>
<dbReference type="HOGENOM" id="CLU_008831_0_1_9"/>
<dbReference type="InParanoid" id="B2A524"/>
<dbReference type="OrthoDB" id="9774737at2"/>
<dbReference type="Proteomes" id="UP000001683">
    <property type="component" value="Chromosome"/>
</dbReference>
<dbReference type="GO" id="GO:0005737">
    <property type="term" value="C:cytoplasm"/>
    <property type="evidence" value="ECO:0007669"/>
    <property type="project" value="UniProtKB-SubCell"/>
</dbReference>
<dbReference type="GO" id="GO:0005524">
    <property type="term" value="F:ATP binding"/>
    <property type="evidence" value="ECO:0007669"/>
    <property type="project" value="UniProtKB-KW"/>
</dbReference>
<dbReference type="GO" id="GO:0046872">
    <property type="term" value="F:metal ion binding"/>
    <property type="evidence" value="ECO:0007669"/>
    <property type="project" value="UniProtKB-UniRule"/>
</dbReference>
<dbReference type="GO" id="GO:0051287">
    <property type="term" value="F:NAD binding"/>
    <property type="evidence" value="ECO:0007669"/>
    <property type="project" value="UniProtKB-ARBA"/>
</dbReference>
<dbReference type="GO" id="GO:0003951">
    <property type="term" value="F:NAD+ kinase activity"/>
    <property type="evidence" value="ECO:0007669"/>
    <property type="project" value="UniProtKB-UniRule"/>
</dbReference>
<dbReference type="GO" id="GO:0019674">
    <property type="term" value="P:NAD metabolic process"/>
    <property type="evidence" value="ECO:0007669"/>
    <property type="project" value="InterPro"/>
</dbReference>
<dbReference type="GO" id="GO:0006741">
    <property type="term" value="P:NADP biosynthetic process"/>
    <property type="evidence" value="ECO:0007669"/>
    <property type="project" value="UniProtKB-UniRule"/>
</dbReference>
<dbReference type="Gene3D" id="3.40.50.10330">
    <property type="entry name" value="Probable inorganic polyphosphate/atp-NAD kinase, domain 1"/>
    <property type="match status" value="1"/>
</dbReference>
<dbReference type="Gene3D" id="2.60.200.30">
    <property type="entry name" value="Probable inorganic polyphosphate/atp-NAD kinase, domain 2"/>
    <property type="match status" value="1"/>
</dbReference>
<dbReference type="HAMAP" id="MF_00361">
    <property type="entry name" value="NAD_kinase"/>
    <property type="match status" value="1"/>
</dbReference>
<dbReference type="InterPro" id="IPR017438">
    <property type="entry name" value="ATP-NAD_kinase_N"/>
</dbReference>
<dbReference type="InterPro" id="IPR017437">
    <property type="entry name" value="ATP-NAD_kinase_PpnK-typ_C"/>
</dbReference>
<dbReference type="InterPro" id="IPR016064">
    <property type="entry name" value="NAD/diacylglycerol_kinase_sf"/>
</dbReference>
<dbReference type="InterPro" id="IPR002504">
    <property type="entry name" value="NADK"/>
</dbReference>
<dbReference type="PANTHER" id="PTHR20275">
    <property type="entry name" value="NAD KINASE"/>
    <property type="match status" value="1"/>
</dbReference>
<dbReference type="PANTHER" id="PTHR20275:SF0">
    <property type="entry name" value="NAD KINASE"/>
    <property type="match status" value="1"/>
</dbReference>
<dbReference type="Pfam" id="PF01513">
    <property type="entry name" value="NAD_kinase"/>
    <property type="match status" value="1"/>
</dbReference>
<dbReference type="Pfam" id="PF20143">
    <property type="entry name" value="NAD_kinase_C"/>
    <property type="match status" value="1"/>
</dbReference>
<dbReference type="SUPFAM" id="SSF111331">
    <property type="entry name" value="NAD kinase/diacylglycerol kinase-like"/>
    <property type="match status" value="1"/>
</dbReference>
<proteinExistence type="inferred from homology"/>
<gene>
    <name evidence="1" type="primary">nadK</name>
    <name type="ordered locus">Nther_1692</name>
</gene>
<comment type="function">
    <text evidence="1">Involved in the regulation of the intracellular balance of NAD and NADP, and is a key enzyme in the biosynthesis of NADP. Catalyzes specifically the phosphorylation on 2'-hydroxyl of the adenosine moiety of NAD to yield NADP.</text>
</comment>
<comment type="catalytic activity">
    <reaction evidence="1">
        <text>NAD(+) + ATP = ADP + NADP(+) + H(+)</text>
        <dbReference type="Rhea" id="RHEA:18629"/>
        <dbReference type="ChEBI" id="CHEBI:15378"/>
        <dbReference type="ChEBI" id="CHEBI:30616"/>
        <dbReference type="ChEBI" id="CHEBI:57540"/>
        <dbReference type="ChEBI" id="CHEBI:58349"/>
        <dbReference type="ChEBI" id="CHEBI:456216"/>
        <dbReference type="EC" id="2.7.1.23"/>
    </reaction>
</comment>
<comment type="cofactor">
    <cofactor evidence="1">
        <name>a divalent metal cation</name>
        <dbReference type="ChEBI" id="CHEBI:60240"/>
    </cofactor>
</comment>
<comment type="subcellular location">
    <subcellularLocation>
        <location evidence="1">Cytoplasm</location>
    </subcellularLocation>
</comment>
<comment type="similarity">
    <text evidence="1">Belongs to the NAD kinase family.</text>
</comment>